<feature type="chain" id="PRO_0000129365" description="Large ribosomal subunit protein uL4A">
    <location>
        <begin position="1"/>
        <end position="363"/>
    </location>
</feature>
<feature type="region of interest" description="C-terminal-extended nuclear localization signal" evidence="1">
    <location>
        <begin position="280"/>
        <end position="363"/>
    </location>
</feature>
<feature type="modified residue" description="Phosphoserine" evidence="2">
    <location>
        <position position="87"/>
    </location>
</feature>
<feature type="sequence conflict" description="In Ref. 1; CAA51666." evidence="3" ref="1">
    <original>S</original>
    <variation>N</variation>
    <location>
        <position position="12"/>
    </location>
</feature>
<feature type="sequence conflict" description="In Ref. 1; CAA51666." evidence="3" ref="1">
    <original>I</original>
    <variation>L</variation>
    <location>
        <position position="22"/>
    </location>
</feature>
<feature type="sequence conflict" description="In Ref. 1; CAA51666." evidence="3" ref="1">
    <original>H</original>
    <variation>S</variation>
    <location>
        <position position="85"/>
    </location>
</feature>
<feature type="sequence conflict" description="In Ref. 1; CAA51666." evidence="3" ref="1">
    <original>P</original>
    <variation>S</variation>
    <location>
        <position position="104"/>
    </location>
</feature>
<feature type="sequence conflict" description="In Ref. 1; CAA51666." evidence="3" ref="1">
    <original>IS</original>
    <variation>TC</variation>
    <location>
        <begin position="124"/>
        <end position="125"/>
    </location>
</feature>
<feature type="sequence conflict" description="In Ref. 1; CAA51666." evidence="3" ref="1">
    <original>V</original>
    <variation>I</variation>
    <location>
        <position position="181"/>
    </location>
</feature>
<feature type="sequence conflict" description="In Ref. 1; CAA51666." evidence="3" ref="1">
    <original>R</original>
    <variation>A</variation>
    <location>
        <position position="197"/>
    </location>
</feature>
<feature type="sequence conflict" description="In Ref. 1; CAA51666." evidence="3" ref="1">
    <original>Q</original>
    <variation>E</variation>
    <location>
        <position position="272"/>
    </location>
</feature>
<feature type="sequence conflict" description="In Ref. 1; CAA51666." evidence="3" ref="1">
    <original>F</original>
    <variation>G</variation>
    <location>
        <position position="278"/>
    </location>
</feature>
<feature type="sequence conflict" description="In Ref. 1; CAA51666." evidence="3" ref="1">
    <original>EN</original>
    <variation>DEI</variation>
    <location>
        <begin position="281"/>
        <end position="282"/>
    </location>
</feature>
<feature type="sequence conflict" description="In Ref. 1." evidence="3" ref="1">
    <original>KF</original>
    <variation>NS</variation>
    <location>
        <begin position="355"/>
        <end position="356"/>
    </location>
</feature>
<gene>
    <name type="primary">rpl402</name>
    <name type="synonym">rpl2</name>
    <name type="synonym">rpl4</name>
    <name type="synonym">rpl4a</name>
    <name type="ORF">SPBP8B7.03c</name>
</gene>
<keyword id="KW-0002">3D-structure</keyword>
<keyword id="KW-0963">Cytoplasm</keyword>
<keyword id="KW-0539">Nucleus</keyword>
<keyword id="KW-0597">Phosphoprotein</keyword>
<keyword id="KW-1185">Reference proteome</keyword>
<keyword id="KW-0687">Ribonucleoprotein</keyword>
<keyword id="KW-0689">Ribosomal protein</keyword>
<comment type="function">
    <text evidence="1">Component of the ribosome, a large ribonucleoprotein complex responsible for the synthesis of proteins in the cell. The small ribosomal subunit (SSU) binds messenger RNAs (mRNAs) and translates the encoded message by selecting cognate aminoacyl-transfer RNA (tRNA) molecules. The large subunit (LSU) contains the ribosomal catalytic site termed the peptidyl transferase center (PTC), which catalyzes the formation of peptide bonds, thereby polymerizing the amino acids delivered by tRNAs into a polypeptide chain. The nascent polypeptides leave the ribosome through a tunnel in the LSU and interact with protein factors that function in enzymatic processing, targeting, and the membrane insertion of nascent chains at the exit of the ribosomal tunnel. uL4 participates in the regulation of the accumulation of its own mRNA.</text>
</comment>
<comment type="subunit">
    <text evidence="1">Component of the large ribosomal subunit (LSU). Mature yeast ribosomes consist of a small (40S) and a large (60S) subunit. The 40S small subunit contains 1 molecule of ribosomal RNA (18S rRNA) and at least 33 different proteins. The large 60S subunit contains 3 rRNA molecules (25S, 5.8S and 5S rRNA) and at least 46 different proteins. uL4 is associated with the polypeptide exit tunnel. uL4 interacts with its chaperone ACL4 and the nuclear import receptor KAP104.</text>
</comment>
<comment type="subcellular location">
    <subcellularLocation>
        <location evidence="1">Cytoplasm</location>
    </subcellularLocation>
    <subcellularLocation>
        <location evidence="1">Nucleus</location>
    </subcellularLocation>
</comment>
<comment type="domain">
    <text evidence="1">The eukaryote-specific C-terminal extension harbors a nuclear import signal and delivers the ACL4-uL4/RPL4 complex to the pre-ribosome, triggering uL4 release from ACL4 and incorporation into the 60S ribosomal subunit.</text>
</comment>
<comment type="miscellaneous">
    <text>There are 2 genes for uL4 in S.pombe.</text>
</comment>
<comment type="similarity">
    <text evidence="3">Belongs to the universal ribosomal protein uL4 family.</text>
</comment>
<sequence length="363" mass="39767">MAAARPTVSIYSKDGSVSSETIALPFVFKAPIRPDLVRSVHTAVAKNKRQPYAVSEKAGHQTSAESWGTGRALARIPRVGGGGTHRSGQAAFGNMCRSGRMFAPTKTWRKWHVKVNQNEKRYAISSAVAASGVPSLLLARGHRIEEIPEVPLVVDDAVQSFQKTKEAVALLKEIKAYRDVVKVANSRKLRAGKGKLRNRRHVQRRGPLVVFNEDAGIVKAFRNIPGVEIVNVRRLNLLQLAPGGHLGRFVIWTKSAFGLLDSVFGSTTEAAQLKKNYFLPENIISNADVTRLINSDEIQSIVKAAGPSRVKRAHVQKKNPLKNKAVLARLNPYAKAYKANVKLNTGKTPKAAGEKFLTVLHEN</sequence>
<accession>P35679</accession>
<accession>O94253</accession>
<organism>
    <name type="scientific">Schizosaccharomyces pombe (strain 972 / ATCC 24843)</name>
    <name type="common">Fission yeast</name>
    <dbReference type="NCBI Taxonomy" id="284812"/>
    <lineage>
        <taxon>Eukaryota</taxon>
        <taxon>Fungi</taxon>
        <taxon>Dikarya</taxon>
        <taxon>Ascomycota</taxon>
        <taxon>Taphrinomycotina</taxon>
        <taxon>Schizosaccharomycetes</taxon>
        <taxon>Schizosaccharomycetales</taxon>
        <taxon>Schizosaccharomycetaceae</taxon>
        <taxon>Schizosaccharomyces</taxon>
    </lineage>
</organism>
<protein>
    <recommendedName>
        <fullName evidence="3">Large ribosomal subunit protein uL4A</fullName>
    </recommendedName>
    <alternativeName>
        <fullName>60S ribosomal protein L4-A</fullName>
    </alternativeName>
    <alternativeName>
        <fullName>L2</fullName>
    </alternativeName>
</protein>
<evidence type="ECO:0000250" key="1">
    <source>
        <dbReference type="UniProtKB" id="P10664"/>
    </source>
</evidence>
<evidence type="ECO:0000269" key="2">
    <source>
    </source>
</evidence>
<evidence type="ECO:0000305" key="3"/>
<reference key="1">
    <citation type="journal article" date="1993" name="Nucleic Acids Res.">
        <title>The primary sequence of the Schizosaccharomyces pombe protein homologous to S.cerevisiae ribosomal protein L2.</title>
        <authorList>
            <person name="Presutti C."/>
            <person name="Villa T."/>
            <person name="Bozzoni I."/>
        </authorList>
    </citation>
    <scope>NUCLEOTIDE SEQUENCE [GENOMIC DNA]</scope>
    <source>
        <strain>1913</strain>
    </source>
</reference>
<reference key="2">
    <citation type="journal article" date="2002" name="Nature">
        <title>The genome sequence of Schizosaccharomyces pombe.</title>
        <authorList>
            <person name="Wood V."/>
            <person name="Gwilliam R."/>
            <person name="Rajandream M.A."/>
            <person name="Lyne M.H."/>
            <person name="Lyne R."/>
            <person name="Stewart A."/>
            <person name="Sgouros J.G."/>
            <person name="Peat N."/>
            <person name="Hayles J."/>
            <person name="Baker S.G."/>
            <person name="Basham D."/>
            <person name="Bowman S."/>
            <person name="Brooks K."/>
            <person name="Brown D."/>
            <person name="Brown S."/>
            <person name="Chillingworth T."/>
            <person name="Churcher C.M."/>
            <person name="Collins M."/>
            <person name="Connor R."/>
            <person name="Cronin A."/>
            <person name="Davis P."/>
            <person name="Feltwell T."/>
            <person name="Fraser A."/>
            <person name="Gentles S."/>
            <person name="Goble A."/>
            <person name="Hamlin N."/>
            <person name="Harris D.E."/>
            <person name="Hidalgo J."/>
            <person name="Hodgson G."/>
            <person name="Holroyd S."/>
            <person name="Hornsby T."/>
            <person name="Howarth S."/>
            <person name="Huckle E.J."/>
            <person name="Hunt S."/>
            <person name="Jagels K."/>
            <person name="James K.D."/>
            <person name="Jones L."/>
            <person name="Jones M."/>
            <person name="Leather S."/>
            <person name="McDonald S."/>
            <person name="McLean J."/>
            <person name="Mooney P."/>
            <person name="Moule S."/>
            <person name="Mungall K.L."/>
            <person name="Murphy L.D."/>
            <person name="Niblett D."/>
            <person name="Odell C."/>
            <person name="Oliver K."/>
            <person name="O'Neil S."/>
            <person name="Pearson D."/>
            <person name="Quail M.A."/>
            <person name="Rabbinowitsch E."/>
            <person name="Rutherford K.M."/>
            <person name="Rutter S."/>
            <person name="Saunders D."/>
            <person name="Seeger K."/>
            <person name="Sharp S."/>
            <person name="Skelton J."/>
            <person name="Simmonds M.N."/>
            <person name="Squares R."/>
            <person name="Squares S."/>
            <person name="Stevens K."/>
            <person name="Taylor K."/>
            <person name="Taylor R.G."/>
            <person name="Tivey A."/>
            <person name="Walsh S.V."/>
            <person name="Warren T."/>
            <person name="Whitehead S."/>
            <person name="Woodward J.R."/>
            <person name="Volckaert G."/>
            <person name="Aert R."/>
            <person name="Robben J."/>
            <person name="Grymonprez B."/>
            <person name="Weltjens I."/>
            <person name="Vanstreels E."/>
            <person name="Rieger M."/>
            <person name="Schaefer M."/>
            <person name="Mueller-Auer S."/>
            <person name="Gabel C."/>
            <person name="Fuchs M."/>
            <person name="Duesterhoeft A."/>
            <person name="Fritzc C."/>
            <person name="Holzer E."/>
            <person name="Moestl D."/>
            <person name="Hilbert H."/>
            <person name="Borzym K."/>
            <person name="Langer I."/>
            <person name="Beck A."/>
            <person name="Lehrach H."/>
            <person name="Reinhardt R."/>
            <person name="Pohl T.M."/>
            <person name="Eger P."/>
            <person name="Zimmermann W."/>
            <person name="Wedler H."/>
            <person name="Wambutt R."/>
            <person name="Purnelle B."/>
            <person name="Goffeau A."/>
            <person name="Cadieu E."/>
            <person name="Dreano S."/>
            <person name="Gloux S."/>
            <person name="Lelaure V."/>
            <person name="Mottier S."/>
            <person name="Galibert F."/>
            <person name="Aves S.J."/>
            <person name="Xiang Z."/>
            <person name="Hunt C."/>
            <person name="Moore K."/>
            <person name="Hurst S.M."/>
            <person name="Lucas M."/>
            <person name="Rochet M."/>
            <person name="Gaillardin C."/>
            <person name="Tallada V.A."/>
            <person name="Garzon A."/>
            <person name="Thode G."/>
            <person name="Daga R.R."/>
            <person name="Cruzado L."/>
            <person name="Jimenez J."/>
            <person name="Sanchez M."/>
            <person name="del Rey F."/>
            <person name="Benito J."/>
            <person name="Dominguez A."/>
            <person name="Revuelta J.L."/>
            <person name="Moreno S."/>
            <person name="Armstrong J."/>
            <person name="Forsburg S.L."/>
            <person name="Cerutti L."/>
            <person name="Lowe T."/>
            <person name="McCombie W.R."/>
            <person name="Paulsen I."/>
            <person name="Potashkin J."/>
            <person name="Shpakovski G.V."/>
            <person name="Ussery D."/>
            <person name="Barrell B.G."/>
            <person name="Nurse P."/>
        </authorList>
    </citation>
    <scope>NUCLEOTIDE SEQUENCE [LARGE SCALE GENOMIC DNA]</scope>
    <source>
        <strain>972 / ATCC 24843</strain>
    </source>
</reference>
<reference key="3">
    <citation type="journal article" date="2008" name="J. Proteome Res.">
        <title>Phosphoproteome analysis of fission yeast.</title>
        <authorList>
            <person name="Wilson-Grady J.T."/>
            <person name="Villen J."/>
            <person name="Gygi S.P."/>
        </authorList>
    </citation>
    <scope>PHOSPHORYLATION [LARGE SCALE ANALYSIS] AT SER-87</scope>
    <scope>IDENTIFICATION BY MASS SPECTROMETRY</scope>
</reference>
<dbReference type="EMBL" id="X73146">
    <property type="protein sequence ID" value="CAA51666.1"/>
    <property type="molecule type" value="Genomic_DNA"/>
</dbReference>
<dbReference type="EMBL" id="CU329671">
    <property type="protein sequence ID" value="CAA21788.1"/>
    <property type="molecule type" value="Genomic_DNA"/>
</dbReference>
<dbReference type="PIR" id="S41640">
    <property type="entry name" value="S41640"/>
</dbReference>
<dbReference type="PIR" id="T40797">
    <property type="entry name" value="T40797"/>
</dbReference>
<dbReference type="RefSeq" id="NP_596510.1">
    <property type="nucleotide sequence ID" value="NM_001022431.2"/>
</dbReference>
<dbReference type="PDB" id="9AXT">
    <property type="method" value="EM"/>
    <property type="resolution" value="2.40 A"/>
    <property type="chains" value="BP=1-363"/>
</dbReference>
<dbReference type="PDB" id="9AXU">
    <property type="method" value="EM"/>
    <property type="resolution" value="1.94 A"/>
    <property type="chains" value="P=1-363"/>
</dbReference>
<dbReference type="PDB" id="9AXV">
    <property type="method" value="EM"/>
    <property type="resolution" value="2.40 A"/>
    <property type="chains" value="BP=1-363"/>
</dbReference>
<dbReference type="PDBsum" id="9AXT"/>
<dbReference type="PDBsum" id="9AXU"/>
<dbReference type="PDBsum" id="9AXV"/>
<dbReference type="EMDB" id="EMD-43972"/>
<dbReference type="EMDB" id="EMD-43973"/>
<dbReference type="EMDB" id="EMD-43976"/>
<dbReference type="SMR" id="P35679"/>
<dbReference type="BioGRID" id="277855">
    <property type="interactions" value="13"/>
</dbReference>
<dbReference type="FunCoup" id="P35679">
    <property type="interactions" value="582"/>
</dbReference>
<dbReference type="IntAct" id="P35679">
    <property type="interactions" value="2"/>
</dbReference>
<dbReference type="STRING" id="284812.P35679"/>
<dbReference type="iPTMnet" id="P35679"/>
<dbReference type="PaxDb" id="4896-SPBP8B7.03c.1"/>
<dbReference type="EnsemblFungi" id="SPBP8B7.03c.1">
    <property type="protein sequence ID" value="SPBP8B7.03c.1:pep"/>
    <property type="gene ID" value="SPBP8B7.03c"/>
</dbReference>
<dbReference type="GeneID" id="2541344"/>
<dbReference type="KEGG" id="spo:2541344"/>
<dbReference type="PomBase" id="SPBP8B7.03c">
    <property type="gene designation" value="rpl402"/>
</dbReference>
<dbReference type="VEuPathDB" id="FungiDB:SPBP8B7.03c"/>
<dbReference type="eggNOG" id="KOG1475">
    <property type="taxonomic scope" value="Eukaryota"/>
</dbReference>
<dbReference type="HOGENOM" id="CLU_026535_0_1_1"/>
<dbReference type="InParanoid" id="P35679"/>
<dbReference type="OMA" id="ALYGTWR"/>
<dbReference type="PhylomeDB" id="P35679"/>
<dbReference type="Reactome" id="R-SPO-156827">
    <property type="pathway name" value="L13a-mediated translational silencing of Ceruloplasmin expression"/>
</dbReference>
<dbReference type="Reactome" id="R-SPO-1799339">
    <property type="pathway name" value="SRP-dependent cotranslational protein targeting to membrane"/>
</dbReference>
<dbReference type="Reactome" id="R-SPO-72689">
    <property type="pathway name" value="Formation of a pool of free 40S subunits"/>
</dbReference>
<dbReference type="Reactome" id="R-SPO-72706">
    <property type="pathway name" value="GTP hydrolysis and joining of the 60S ribosomal subunit"/>
</dbReference>
<dbReference type="Reactome" id="R-SPO-975956">
    <property type="pathway name" value="Nonsense Mediated Decay (NMD) independent of the Exon Junction Complex (EJC)"/>
</dbReference>
<dbReference type="Reactome" id="R-SPO-975957">
    <property type="pathway name" value="Nonsense Mediated Decay (NMD) enhanced by the Exon Junction Complex (EJC)"/>
</dbReference>
<dbReference type="PRO" id="PR:P35679"/>
<dbReference type="Proteomes" id="UP000002485">
    <property type="component" value="Chromosome II"/>
</dbReference>
<dbReference type="GO" id="GO:0022625">
    <property type="term" value="C:cytosolic large ribosomal subunit"/>
    <property type="evidence" value="ECO:0000269"/>
    <property type="project" value="PomBase"/>
</dbReference>
<dbReference type="GO" id="GO:0005634">
    <property type="term" value="C:nucleus"/>
    <property type="evidence" value="ECO:0007669"/>
    <property type="project" value="UniProtKB-SubCell"/>
</dbReference>
<dbReference type="GO" id="GO:0030684">
    <property type="term" value="C:preribosome"/>
    <property type="evidence" value="ECO:0000314"/>
    <property type="project" value="PomBase"/>
</dbReference>
<dbReference type="GO" id="GO:0003723">
    <property type="term" value="F:RNA binding"/>
    <property type="evidence" value="ECO:0000318"/>
    <property type="project" value="GO_Central"/>
</dbReference>
<dbReference type="GO" id="GO:0003735">
    <property type="term" value="F:structural constituent of ribosome"/>
    <property type="evidence" value="ECO:0000318"/>
    <property type="project" value="GO_Central"/>
</dbReference>
<dbReference type="GO" id="GO:0002181">
    <property type="term" value="P:cytoplasmic translation"/>
    <property type="evidence" value="ECO:0000266"/>
    <property type="project" value="PomBase"/>
</dbReference>
<dbReference type="FunFam" id="3.40.1370.10:FF:000002">
    <property type="entry name" value="60S ribosomal protein L4"/>
    <property type="match status" value="1"/>
</dbReference>
<dbReference type="Gene3D" id="3.40.1370.10">
    <property type="match status" value="1"/>
</dbReference>
<dbReference type="InterPro" id="IPR025755">
    <property type="entry name" value="Ribos_uL4_C_dom"/>
</dbReference>
<dbReference type="InterPro" id="IPR002136">
    <property type="entry name" value="Ribosomal_uL4"/>
</dbReference>
<dbReference type="InterPro" id="IPR023574">
    <property type="entry name" value="Ribosomal_uL4_dom_sf"/>
</dbReference>
<dbReference type="InterPro" id="IPR013000">
    <property type="entry name" value="Ribosomal_uL4_euk/arc_CS"/>
</dbReference>
<dbReference type="InterPro" id="IPR045240">
    <property type="entry name" value="Ribosomal_uL4_euk/arch"/>
</dbReference>
<dbReference type="PANTHER" id="PTHR19431">
    <property type="entry name" value="60S RIBOSOMAL PROTEIN L4"/>
    <property type="match status" value="1"/>
</dbReference>
<dbReference type="Pfam" id="PF14374">
    <property type="entry name" value="Ribos_L4_asso_C"/>
    <property type="match status" value="1"/>
</dbReference>
<dbReference type="Pfam" id="PF00573">
    <property type="entry name" value="Ribosomal_L4"/>
    <property type="match status" value="1"/>
</dbReference>
<dbReference type="SUPFAM" id="SSF52166">
    <property type="entry name" value="Ribosomal protein L4"/>
    <property type="match status" value="1"/>
</dbReference>
<dbReference type="PROSITE" id="PS00939">
    <property type="entry name" value="RIBOSOMAL_L1E"/>
    <property type="match status" value="1"/>
</dbReference>
<name>RL4A_SCHPO</name>
<proteinExistence type="evidence at protein level"/>